<name>AGH_ARMVU</name>
<reference key="1">
    <citation type="journal article" date="1999" name="Biochem. Biophys. Res. Commun.">
        <title>Characterization and cDNA cloning of androgenic gland hormone of the terrestrial isopod Armadillidium vulgare.</title>
        <authorList>
            <person name="Okuno A."/>
            <person name="Hasegawa Y."/>
            <person name="Ohira T."/>
            <person name="Katakura Y."/>
            <person name="Nagasawa H."/>
        </authorList>
    </citation>
    <scope>NUCLEOTIDE SEQUENCE [MRNA]</scope>
    <source>
        <tissue>Androgenic gland</tissue>
    </source>
</reference>
<reference key="2">
    <citation type="journal article" date="1999" name="Eur. J. Biochem.">
        <title>The structure of a glycosylated protein hormone responsible for sex determination in the isopod, Armadillidium vulgare.</title>
        <authorList>
            <person name="Martin G."/>
            <person name="Sorokine O."/>
            <person name="Moniatte M."/>
            <person name="Bulet P."/>
            <person name="Hetru C."/>
            <person name="van Dorsselaer A."/>
        </authorList>
    </citation>
    <scope>PARTIAL PROTEIN SEQUENCE</scope>
    <scope>GLYCOSYLATION AT ASN-133</scope>
    <source>
        <tissue>Androgenic gland</tissue>
    </source>
</reference>
<protein>
    <recommendedName>
        <fullName>Androgenic gland hormone</fullName>
    </recommendedName>
    <alternativeName>
        <fullName>Arv-AGH</fullName>
    </alternativeName>
    <component>
        <recommendedName>
            <fullName>Androgenic gland hormone B chain</fullName>
        </recommendedName>
    </component>
    <component>
        <recommendedName>
            <fullName>Androgenic gland hormone A chain</fullName>
        </recommendedName>
    </component>
</protein>
<feature type="signal peptide">
    <location>
        <begin position="1"/>
        <end position="21"/>
    </location>
</feature>
<feature type="peptide" id="PRO_0000020644" description="Androgenic gland hormone B chain">
    <location>
        <begin position="22"/>
        <end position="65"/>
    </location>
</feature>
<feature type="propeptide" id="PRO_0000020645" description="C peptide">
    <location>
        <begin position="68"/>
        <end position="113"/>
    </location>
</feature>
<feature type="peptide" id="PRO_0000020646" description="Androgenic gland hormone A chain">
    <location>
        <begin position="116"/>
        <end position="144"/>
    </location>
</feature>
<feature type="glycosylation site" id="CAR_000163" description="N-linked (GlcNAc...) (complex) asparagine" evidence="1">
    <location>
        <position position="133"/>
    </location>
</feature>
<feature type="disulfide bond" description="Or C-33 with C-124">
    <location>
        <begin position="33"/>
        <end position="123"/>
    </location>
</feature>
<feature type="disulfide bond" description="Or C-44 with C-59">
    <location>
        <begin position="42"/>
        <end position="59"/>
    </location>
</feature>
<feature type="disulfide bond" description="Or C-42 with C-141">
    <location>
        <begin position="44"/>
        <end position="141"/>
    </location>
</feature>
<feature type="disulfide bond" description="Or C-123 with C-132">
    <location>
        <begin position="124"/>
        <end position="132"/>
    </location>
</feature>
<sequence>MKGLVILVSLMCLALYNRICAYQVRGMRSDVLCGDIRFTVQCICNELGYFPTERLDKPCPWPNREKRSAPEDELAFEDYEDQDYFHPRALSIPSEIEHDNEKESDAFSILSRGKREIAFYQECCNIRTEHKCNRTTVSLYCRTY</sequence>
<evidence type="ECO:0000269" key="1">
    <source>
    </source>
</evidence>
<proteinExistence type="evidence at protein level"/>
<dbReference type="EMBL" id="AB029615">
    <property type="protein sequence ID" value="BAA86893.1"/>
    <property type="molecule type" value="mRNA"/>
</dbReference>
<dbReference type="PIR" id="JC7121">
    <property type="entry name" value="JC7121"/>
</dbReference>
<dbReference type="SMR" id="Q9U8R2"/>
<dbReference type="GlyConnect" id="51">
    <property type="glycosylation" value="3 N-Linked glycans (1 site)"/>
</dbReference>
<dbReference type="GO" id="GO:0005576">
    <property type="term" value="C:extracellular region"/>
    <property type="evidence" value="ECO:0007669"/>
    <property type="project" value="UniProtKB-SubCell"/>
</dbReference>
<dbReference type="GO" id="GO:0005179">
    <property type="term" value="F:hormone activity"/>
    <property type="evidence" value="ECO:0007669"/>
    <property type="project" value="UniProtKB-KW"/>
</dbReference>
<dbReference type="GO" id="GO:0030154">
    <property type="term" value="P:cell differentiation"/>
    <property type="evidence" value="ECO:0007669"/>
    <property type="project" value="UniProtKB-KW"/>
</dbReference>
<dbReference type="GO" id="GO:0007548">
    <property type="term" value="P:sex differentiation"/>
    <property type="evidence" value="ECO:0007669"/>
    <property type="project" value="UniProtKB-KW"/>
</dbReference>
<dbReference type="GO" id="GO:0007283">
    <property type="term" value="P:spermatogenesis"/>
    <property type="evidence" value="ECO:0007669"/>
    <property type="project" value="UniProtKB-KW"/>
</dbReference>
<dbReference type="InterPro" id="IPR020382">
    <property type="entry name" value="AGH"/>
</dbReference>
<dbReference type="Pfam" id="PF17558">
    <property type="entry name" value="AGH"/>
    <property type="match status" value="1"/>
</dbReference>
<comment type="function">
    <text>Controls sex differentiation and the formation of male appendages, spermatogenesis, pigmentation, and male specific behavior.</text>
</comment>
<comment type="subcellular location">
    <subcellularLocation>
        <location>Secreted</location>
    </subcellularLocation>
</comment>
<comment type="tissue specificity">
    <text>Androgenic gland.</text>
</comment>
<accession>Q9U8R2</accession>
<organism>
    <name type="scientific">Armadillidium vulgare</name>
    <name type="common">Pillbug</name>
    <name type="synonym">Pill woodlouse</name>
    <dbReference type="NCBI Taxonomy" id="13347"/>
    <lineage>
        <taxon>Eukaryota</taxon>
        <taxon>Metazoa</taxon>
        <taxon>Ecdysozoa</taxon>
        <taxon>Arthropoda</taxon>
        <taxon>Crustacea</taxon>
        <taxon>Multicrustacea</taxon>
        <taxon>Malacostraca</taxon>
        <taxon>Eumalacostraca</taxon>
        <taxon>Peracarida</taxon>
        <taxon>Isopoda</taxon>
        <taxon>Oniscidea</taxon>
        <taxon>Crinocheta</taxon>
        <taxon>Armadillidiidae</taxon>
        <taxon>Armadillidium</taxon>
    </lineage>
</organism>
<keyword id="KW-0165">Cleavage on pair of basic residues</keyword>
<keyword id="KW-0217">Developmental protein</keyword>
<keyword id="KW-0221">Differentiation</keyword>
<keyword id="KW-0903">Direct protein sequencing</keyword>
<keyword id="KW-1015">Disulfide bond</keyword>
<keyword id="KW-0325">Glycoprotein</keyword>
<keyword id="KW-0372">Hormone</keyword>
<keyword id="KW-0964">Secreted</keyword>
<keyword id="KW-0726">Sexual differentiation</keyword>
<keyword id="KW-0732">Signal</keyword>
<keyword id="KW-0744">Spermatogenesis</keyword>